<keyword id="KW-0004">4Fe-4S</keyword>
<keyword id="KW-0963">Cytoplasm</keyword>
<keyword id="KW-1015">Disulfide bond</keyword>
<keyword id="KW-0408">Iron</keyword>
<keyword id="KW-0411">Iron-sulfur</keyword>
<keyword id="KW-0479">Metal-binding</keyword>
<keyword id="KW-0489">Methyltransferase</keyword>
<keyword id="KW-1185">Reference proteome</keyword>
<keyword id="KW-0698">rRNA processing</keyword>
<keyword id="KW-0949">S-adenosyl-L-methionine</keyword>
<keyword id="KW-0808">Transferase</keyword>
<keyword id="KW-0819">tRNA processing</keyword>
<feature type="chain" id="PRO_1000188560" description="Probable dual-specificity RNA methyltransferase RlmN">
    <location>
        <begin position="1"/>
        <end position="369"/>
    </location>
</feature>
<feature type="domain" description="Radical SAM core" evidence="2">
    <location>
        <begin position="106"/>
        <end position="341"/>
    </location>
</feature>
<feature type="active site" description="Proton acceptor" evidence="1">
    <location>
        <position position="98"/>
    </location>
</feature>
<feature type="active site" description="S-methylcysteine intermediate" evidence="1">
    <location>
        <position position="346"/>
    </location>
</feature>
<feature type="binding site" evidence="1">
    <location>
        <position position="120"/>
    </location>
    <ligand>
        <name>[4Fe-4S] cluster</name>
        <dbReference type="ChEBI" id="CHEBI:49883"/>
        <note>4Fe-4S-S-AdoMet</note>
    </ligand>
</feature>
<feature type="binding site" evidence="1">
    <location>
        <position position="124"/>
    </location>
    <ligand>
        <name>[4Fe-4S] cluster</name>
        <dbReference type="ChEBI" id="CHEBI:49883"/>
        <note>4Fe-4S-S-AdoMet</note>
    </ligand>
</feature>
<feature type="binding site" evidence="1">
    <location>
        <position position="127"/>
    </location>
    <ligand>
        <name>[4Fe-4S] cluster</name>
        <dbReference type="ChEBI" id="CHEBI:49883"/>
        <note>4Fe-4S-S-AdoMet</note>
    </ligand>
</feature>
<feature type="binding site" evidence="1">
    <location>
        <begin position="171"/>
        <end position="172"/>
    </location>
    <ligand>
        <name>S-adenosyl-L-methionine</name>
        <dbReference type="ChEBI" id="CHEBI:59789"/>
    </ligand>
</feature>
<feature type="binding site" evidence="1">
    <location>
        <position position="204"/>
    </location>
    <ligand>
        <name>S-adenosyl-L-methionine</name>
        <dbReference type="ChEBI" id="CHEBI:59789"/>
    </ligand>
</feature>
<feature type="binding site" evidence="1">
    <location>
        <begin position="227"/>
        <end position="229"/>
    </location>
    <ligand>
        <name>S-adenosyl-L-methionine</name>
        <dbReference type="ChEBI" id="CHEBI:59789"/>
    </ligand>
</feature>
<feature type="binding site" evidence="1">
    <location>
        <position position="303"/>
    </location>
    <ligand>
        <name>S-adenosyl-L-methionine</name>
        <dbReference type="ChEBI" id="CHEBI:59789"/>
    </ligand>
</feature>
<feature type="disulfide bond" description="(transient)" evidence="1">
    <location>
        <begin position="113"/>
        <end position="346"/>
    </location>
</feature>
<name>RLMN_CHLT3</name>
<organism>
    <name type="scientific">Chloroherpeton thalassium (strain ATCC 35110 / GB-78)</name>
    <dbReference type="NCBI Taxonomy" id="517418"/>
    <lineage>
        <taxon>Bacteria</taxon>
        <taxon>Pseudomonadati</taxon>
        <taxon>Chlorobiota</taxon>
        <taxon>Chlorobiia</taxon>
        <taxon>Chlorobiales</taxon>
        <taxon>Chloroherpetonaceae</taxon>
        <taxon>Chloroherpeton</taxon>
    </lineage>
</organism>
<evidence type="ECO:0000255" key="1">
    <source>
        <dbReference type="HAMAP-Rule" id="MF_01849"/>
    </source>
</evidence>
<evidence type="ECO:0000255" key="2">
    <source>
        <dbReference type="PROSITE-ProRule" id="PRU01266"/>
    </source>
</evidence>
<sequence>MNEVKHDIKALSLEALMALINSYGQPAFRAKQIFHWIYAHGVTDFAQMKNLSASFQTLLSQHFTVSSIQPHADTVSHEITPEQTVKFLFRLSDEQSIESVFIPSDSTSRNTLCISSQVGCAFACKFCATGYMGFIRNLTIGEILDQVLWVNRWLGDQRGGKITNVVFMGMGEPLANFDNCLAAIRILTNPDYAFQISTRKITVSTVGFIPGIQRLIDTGINCKLAISLHSAHQAIREELIPIAKEYSLATLKAILTRYNQAYKQPITFEYSLIHKINDSEQDAILLSKFCKGINCKINLIDYNSVDNIDYLPSPEGHKQAFIRKCIEHGLTVTVRKSRGADIQAACGQLAIQHVHGKKFSKIQTSRHST</sequence>
<comment type="function">
    <text evidence="1">Specifically methylates position 2 of adenine 2503 in 23S rRNA and position 2 of adenine 37 in tRNAs.</text>
</comment>
<comment type="catalytic activity">
    <reaction evidence="1">
        <text>adenosine(2503) in 23S rRNA + 2 reduced [2Fe-2S]-[ferredoxin] + 2 S-adenosyl-L-methionine = 2-methyladenosine(2503) in 23S rRNA + 5'-deoxyadenosine + L-methionine + 2 oxidized [2Fe-2S]-[ferredoxin] + S-adenosyl-L-homocysteine</text>
        <dbReference type="Rhea" id="RHEA:42916"/>
        <dbReference type="Rhea" id="RHEA-COMP:10000"/>
        <dbReference type="Rhea" id="RHEA-COMP:10001"/>
        <dbReference type="Rhea" id="RHEA-COMP:10152"/>
        <dbReference type="Rhea" id="RHEA-COMP:10282"/>
        <dbReference type="ChEBI" id="CHEBI:17319"/>
        <dbReference type="ChEBI" id="CHEBI:33737"/>
        <dbReference type="ChEBI" id="CHEBI:33738"/>
        <dbReference type="ChEBI" id="CHEBI:57844"/>
        <dbReference type="ChEBI" id="CHEBI:57856"/>
        <dbReference type="ChEBI" id="CHEBI:59789"/>
        <dbReference type="ChEBI" id="CHEBI:74411"/>
        <dbReference type="ChEBI" id="CHEBI:74497"/>
        <dbReference type="EC" id="2.1.1.192"/>
    </reaction>
</comment>
<comment type="catalytic activity">
    <reaction evidence="1">
        <text>adenosine(37) in tRNA + 2 reduced [2Fe-2S]-[ferredoxin] + 2 S-adenosyl-L-methionine = 2-methyladenosine(37) in tRNA + 5'-deoxyadenosine + L-methionine + 2 oxidized [2Fe-2S]-[ferredoxin] + S-adenosyl-L-homocysteine</text>
        <dbReference type="Rhea" id="RHEA:43332"/>
        <dbReference type="Rhea" id="RHEA-COMP:10000"/>
        <dbReference type="Rhea" id="RHEA-COMP:10001"/>
        <dbReference type="Rhea" id="RHEA-COMP:10162"/>
        <dbReference type="Rhea" id="RHEA-COMP:10485"/>
        <dbReference type="ChEBI" id="CHEBI:17319"/>
        <dbReference type="ChEBI" id="CHEBI:33737"/>
        <dbReference type="ChEBI" id="CHEBI:33738"/>
        <dbReference type="ChEBI" id="CHEBI:57844"/>
        <dbReference type="ChEBI" id="CHEBI:57856"/>
        <dbReference type="ChEBI" id="CHEBI:59789"/>
        <dbReference type="ChEBI" id="CHEBI:74411"/>
        <dbReference type="ChEBI" id="CHEBI:74497"/>
        <dbReference type="EC" id="2.1.1.192"/>
    </reaction>
</comment>
<comment type="cofactor">
    <cofactor evidence="1">
        <name>[4Fe-4S] cluster</name>
        <dbReference type="ChEBI" id="CHEBI:49883"/>
    </cofactor>
    <text evidence="1">Binds 1 [4Fe-4S] cluster. The cluster is coordinated with 3 cysteines and an exchangeable S-adenosyl-L-methionine.</text>
</comment>
<comment type="subcellular location">
    <subcellularLocation>
        <location evidence="1">Cytoplasm</location>
    </subcellularLocation>
</comment>
<comment type="miscellaneous">
    <text evidence="1">Reaction proceeds by a ping-pong mechanism involving intermediate methylation of a conserved cysteine residue.</text>
</comment>
<comment type="similarity">
    <text evidence="1">Belongs to the radical SAM superfamily. RlmN family.</text>
</comment>
<dbReference type="EC" id="2.1.1.192" evidence="1"/>
<dbReference type="EMBL" id="CP001100">
    <property type="protein sequence ID" value="ACF13988.1"/>
    <property type="molecule type" value="Genomic_DNA"/>
</dbReference>
<dbReference type="RefSeq" id="WP_012500072.1">
    <property type="nucleotide sequence ID" value="NC_011026.1"/>
</dbReference>
<dbReference type="SMR" id="B3QS43"/>
<dbReference type="STRING" id="517418.Ctha_1529"/>
<dbReference type="KEGG" id="cts:Ctha_1529"/>
<dbReference type="eggNOG" id="COG0820">
    <property type="taxonomic scope" value="Bacteria"/>
</dbReference>
<dbReference type="HOGENOM" id="CLU_029101_0_0_10"/>
<dbReference type="OrthoDB" id="9793973at2"/>
<dbReference type="Proteomes" id="UP000001208">
    <property type="component" value="Chromosome"/>
</dbReference>
<dbReference type="GO" id="GO:0005737">
    <property type="term" value="C:cytoplasm"/>
    <property type="evidence" value="ECO:0007669"/>
    <property type="project" value="UniProtKB-SubCell"/>
</dbReference>
<dbReference type="GO" id="GO:0051539">
    <property type="term" value="F:4 iron, 4 sulfur cluster binding"/>
    <property type="evidence" value="ECO:0007669"/>
    <property type="project" value="UniProtKB-UniRule"/>
</dbReference>
<dbReference type="GO" id="GO:0046872">
    <property type="term" value="F:metal ion binding"/>
    <property type="evidence" value="ECO:0007669"/>
    <property type="project" value="UniProtKB-KW"/>
</dbReference>
<dbReference type="GO" id="GO:0070040">
    <property type="term" value="F:rRNA (adenine(2503)-C2-)-methyltransferase activity"/>
    <property type="evidence" value="ECO:0007669"/>
    <property type="project" value="UniProtKB-UniRule"/>
</dbReference>
<dbReference type="GO" id="GO:0019843">
    <property type="term" value="F:rRNA binding"/>
    <property type="evidence" value="ECO:0007669"/>
    <property type="project" value="UniProtKB-UniRule"/>
</dbReference>
<dbReference type="GO" id="GO:0002935">
    <property type="term" value="F:tRNA (adenine(37)-C2)-methyltransferase activity"/>
    <property type="evidence" value="ECO:0007669"/>
    <property type="project" value="UniProtKB-UniRule"/>
</dbReference>
<dbReference type="GO" id="GO:0000049">
    <property type="term" value="F:tRNA binding"/>
    <property type="evidence" value="ECO:0007669"/>
    <property type="project" value="UniProtKB-UniRule"/>
</dbReference>
<dbReference type="GO" id="GO:0070475">
    <property type="term" value="P:rRNA base methylation"/>
    <property type="evidence" value="ECO:0007669"/>
    <property type="project" value="UniProtKB-UniRule"/>
</dbReference>
<dbReference type="GO" id="GO:0030488">
    <property type="term" value="P:tRNA methylation"/>
    <property type="evidence" value="ECO:0007669"/>
    <property type="project" value="UniProtKB-UniRule"/>
</dbReference>
<dbReference type="CDD" id="cd01335">
    <property type="entry name" value="Radical_SAM"/>
    <property type="match status" value="1"/>
</dbReference>
<dbReference type="FunFam" id="3.20.20.70:FF:000014">
    <property type="entry name" value="Probable dual-specificity RNA methyltransferase RlmN"/>
    <property type="match status" value="1"/>
</dbReference>
<dbReference type="Gene3D" id="1.10.150.530">
    <property type="match status" value="1"/>
</dbReference>
<dbReference type="Gene3D" id="3.20.20.70">
    <property type="entry name" value="Aldolase class I"/>
    <property type="match status" value="1"/>
</dbReference>
<dbReference type="HAMAP" id="MF_01849">
    <property type="entry name" value="RNA_methyltr_RlmN"/>
    <property type="match status" value="1"/>
</dbReference>
<dbReference type="InterPro" id="IPR013785">
    <property type="entry name" value="Aldolase_TIM"/>
</dbReference>
<dbReference type="InterPro" id="IPR040072">
    <property type="entry name" value="Methyltransferase_A"/>
</dbReference>
<dbReference type="InterPro" id="IPR048641">
    <property type="entry name" value="RlmN_N"/>
</dbReference>
<dbReference type="InterPro" id="IPR027492">
    <property type="entry name" value="RNA_MTrfase_RlmN"/>
</dbReference>
<dbReference type="InterPro" id="IPR004383">
    <property type="entry name" value="rRNA_lsu_MTrfase_RlmN/Cfr"/>
</dbReference>
<dbReference type="InterPro" id="IPR007197">
    <property type="entry name" value="rSAM"/>
</dbReference>
<dbReference type="NCBIfam" id="TIGR00048">
    <property type="entry name" value="rRNA_mod_RlmN"/>
    <property type="match status" value="1"/>
</dbReference>
<dbReference type="PANTHER" id="PTHR30544">
    <property type="entry name" value="23S RRNA METHYLTRANSFERASE"/>
    <property type="match status" value="1"/>
</dbReference>
<dbReference type="PANTHER" id="PTHR30544:SF5">
    <property type="entry name" value="RADICAL SAM CORE DOMAIN-CONTAINING PROTEIN"/>
    <property type="match status" value="1"/>
</dbReference>
<dbReference type="Pfam" id="PF04055">
    <property type="entry name" value="Radical_SAM"/>
    <property type="match status" value="1"/>
</dbReference>
<dbReference type="Pfam" id="PF21016">
    <property type="entry name" value="RlmN_N"/>
    <property type="match status" value="1"/>
</dbReference>
<dbReference type="PIRSF" id="PIRSF006004">
    <property type="entry name" value="CHP00048"/>
    <property type="match status" value="1"/>
</dbReference>
<dbReference type="SFLD" id="SFLDF00275">
    <property type="entry name" value="adenosine_C2_methyltransferase"/>
    <property type="match status" value="1"/>
</dbReference>
<dbReference type="SFLD" id="SFLDG01062">
    <property type="entry name" value="methyltransferase_(Class_A)"/>
    <property type="match status" value="1"/>
</dbReference>
<dbReference type="SUPFAM" id="SSF102114">
    <property type="entry name" value="Radical SAM enzymes"/>
    <property type="match status" value="1"/>
</dbReference>
<dbReference type="PROSITE" id="PS51918">
    <property type="entry name" value="RADICAL_SAM"/>
    <property type="match status" value="1"/>
</dbReference>
<accession>B3QS43</accession>
<proteinExistence type="inferred from homology"/>
<gene>
    <name evidence="1" type="primary">rlmN</name>
    <name type="ordered locus">Ctha_1529</name>
</gene>
<protein>
    <recommendedName>
        <fullName evidence="1">Probable dual-specificity RNA methyltransferase RlmN</fullName>
        <ecNumber evidence="1">2.1.1.192</ecNumber>
    </recommendedName>
    <alternativeName>
        <fullName evidence="1">23S rRNA (adenine(2503)-C(2))-methyltransferase</fullName>
    </alternativeName>
    <alternativeName>
        <fullName evidence="1">23S rRNA m2A2503 methyltransferase</fullName>
    </alternativeName>
    <alternativeName>
        <fullName evidence="1">Ribosomal RNA large subunit methyltransferase N</fullName>
    </alternativeName>
    <alternativeName>
        <fullName evidence="1">tRNA (adenine(37)-C(2))-methyltransferase</fullName>
    </alternativeName>
    <alternativeName>
        <fullName evidence="1">tRNA m2A37 methyltransferase</fullName>
    </alternativeName>
</protein>
<reference key="1">
    <citation type="submission" date="2008-06" db="EMBL/GenBank/DDBJ databases">
        <title>Complete sequence of Chloroherpeton thalassium ATCC 35110.</title>
        <authorList>
            <consortium name="US DOE Joint Genome Institute"/>
            <person name="Lucas S."/>
            <person name="Copeland A."/>
            <person name="Lapidus A."/>
            <person name="Glavina del Rio T."/>
            <person name="Dalin E."/>
            <person name="Tice H."/>
            <person name="Bruce D."/>
            <person name="Goodwin L."/>
            <person name="Pitluck S."/>
            <person name="Schmutz J."/>
            <person name="Larimer F."/>
            <person name="Land M."/>
            <person name="Hauser L."/>
            <person name="Kyrpides N."/>
            <person name="Mikhailova N."/>
            <person name="Liu Z."/>
            <person name="Li T."/>
            <person name="Zhao F."/>
            <person name="Overmann J."/>
            <person name="Bryant D.A."/>
            <person name="Richardson P."/>
        </authorList>
    </citation>
    <scope>NUCLEOTIDE SEQUENCE [LARGE SCALE GENOMIC DNA]</scope>
    <source>
        <strain>ATCC 35110 / GB-78</strain>
    </source>
</reference>